<dbReference type="EC" id="2.5.1.6" evidence="1"/>
<dbReference type="EMBL" id="CP000013">
    <property type="protein sequence ID" value="AAU07228.1"/>
    <property type="molecule type" value="Genomic_DNA"/>
</dbReference>
<dbReference type="RefSeq" id="WP_011193702.1">
    <property type="nucleotide sequence ID" value="NC_006156.1"/>
</dbReference>
<dbReference type="SMR" id="Q661P3"/>
<dbReference type="GeneID" id="45161163"/>
<dbReference type="KEGG" id="bga:BG0375"/>
<dbReference type="eggNOG" id="COG0192">
    <property type="taxonomic scope" value="Bacteria"/>
</dbReference>
<dbReference type="HOGENOM" id="CLU_041802_1_1_12"/>
<dbReference type="OrthoDB" id="9801686at2"/>
<dbReference type="UniPathway" id="UPA00315">
    <property type="reaction ID" value="UER00080"/>
</dbReference>
<dbReference type="Proteomes" id="UP000002276">
    <property type="component" value="Chromosome"/>
</dbReference>
<dbReference type="GO" id="GO:0005737">
    <property type="term" value="C:cytoplasm"/>
    <property type="evidence" value="ECO:0007669"/>
    <property type="project" value="UniProtKB-SubCell"/>
</dbReference>
<dbReference type="GO" id="GO:0005524">
    <property type="term" value="F:ATP binding"/>
    <property type="evidence" value="ECO:0007669"/>
    <property type="project" value="UniProtKB-UniRule"/>
</dbReference>
<dbReference type="GO" id="GO:0000287">
    <property type="term" value="F:magnesium ion binding"/>
    <property type="evidence" value="ECO:0007669"/>
    <property type="project" value="UniProtKB-UniRule"/>
</dbReference>
<dbReference type="GO" id="GO:0004478">
    <property type="term" value="F:methionine adenosyltransferase activity"/>
    <property type="evidence" value="ECO:0007669"/>
    <property type="project" value="UniProtKB-UniRule"/>
</dbReference>
<dbReference type="GO" id="GO:0006730">
    <property type="term" value="P:one-carbon metabolic process"/>
    <property type="evidence" value="ECO:0007669"/>
    <property type="project" value="UniProtKB-KW"/>
</dbReference>
<dbReference type="GO" id="GO:0006556">
    <property type="term" value="P:S-adenosylmethionine biosynthetic process"/>
    <property type="evidence" value="ECO:0007669"/>
    <property type="project" value="UniProtKB-UniRule"/>
</dbReference>
<dbReference type="CDD" id="cd18079">
    <property type="entry name" value="S-AdoMet_synt"/>
    <property type="match status" value="1"/>
</dbReference>
<dbReference type="FunFam" id="3.30.300.10:FF:000003">
    <property type="entry name" value="S-adenosylmethionine synthase"/>
    <property type="match status" value="1"/>
</dbReference>
<dbReference type="Gene3D" id="3.30.300.10">
    <property type="match status" value="3"/>
</dbReference>
<dbReference type="HAMAP" id="MF_00086">
    <property type="entry name" value="S_AdoMet_synth1"/>
    <property type="match status" value="1"/>
</dbReference>
<dbReference type="InterPro" id="IPR022631">
    <property type="entry name" value="ADOMET_SYNTHASE_CS"/>
</dbReference>
<dbReference type="InterPro" id="IPR022630">
    <property type="entry name" value="S-AdoMet_synt_C"/>
</dbReference>
<dbReference type="InterPro" id="IPR022629">
    <property type="entry name" value="S-AdoMet_synt_central"/>
</dbReference>
<dbReference type="InterPro" id="IPR022628">
    <property type="entry name" value="S-AdoMet_synt_N"/>
</dbReference>
<dbReference type="InterPro" id="IPR002133">
    <property type="entry name" value="S-AdoMet_synthetase"/>
</dbReference>
<dbReference type="InterPro" id="IPR022636">
    <property type="entry name" value="S-AdoMet_synthetase_sfam"/>
</dbReference>
<dbReference type="NCBIfam" id="TIGR01034">
    <property type="entry name" value="metK"/>
    <property type="match status" value="1"/>
</dbReference>
<dbReference type="PANTHER" id="PTHR11964">
    <property type="entry name" value="S-ADENOSYLMETHIONINE SYNTHETASE"/>
    <property type="match status" value="1"/>
</dbReference>
<dbReference type="Pfam" id="PF02773">
    <property type="entry name" value="S-AdoMet_synt_C"/>
    <property type="match status" value="1"/>
</dbReference>
<dbReference type="Pfam" id="PF02772">
    <property type="entry name" value="S-AdoMet_synt_M"/>
    <property type="match status" value="1"/>
</dbReference>
<dbReference type="Pfam" id="PF00438">
    <property type="entry name" value="S-AdoMet_synt_N"/>
    <property type="match status" value="1"/>
</dbReference>
<dbReference type="PIRSF" id="PIRSF000497">
    <property type="entry name" value="MAT"/>
    <property type="match status" value="1"/>
</dbReference>
<dbReference type="SUPFAM" id="SSF55973">
    <property type="entry name" value="S-adenosylmethionine synthetase"/>
    <property type="match status" value="3"/>
</dbReference>
<dbReference type="PROSITE" id="PS00376">
    <property type="entry name" value="ADOMET_SYNTHASE_1"/>
    <property type="match status" value="1"/>
</dbReference>
<dbReference type="PROSITE" id="PS00377">
    <property type="entry name" value="ADOMET_SYNTHASE_2"/>
    <property type="match status" value="1"/>
</dbReference>
<keyword id="KW-0067">ATP-binding</keyword>
<keyword id="KW-0963">Cytoplasm</keyword>
<keyword id="KW-0460">Magnesium</keyword>
<keyword id="KW-0479">Metal-binding</keyword>
<keyword id="KW-0547">Nucleotide-binding</keyword>
<keyword id="KW-0554">One-carbon metabolism</keyword>
<keyword id="KW-0630">Potassium</keyword>
<keyword id="KW-0808">Transferase</keyword>
<reference key="1">
    <citation type="journal article" date="2004" name="Nucleic Acids Res.">
        <title>Comparative analysis of the Borrelia garinii genome.</title>
        <authorList>
            <person name="Gloeckner G."/>
            <person name="Lehmann R."/>
            <person name="Romualdi A."/>
            <person name="Pradella S."/>
            <person name="Schulte-Spechtel U."/>
            <person name="Schilhabel M."/>
            <person name="Wilske B."/>
            <person name="Suehnel J."/>
            <person name="Platzer M."/>
        </authorList>
    </citation>
    <scope>NUCLEOTIDE SEQUENCE [LARGE SCALE GENOMIC DNA]</scope>
    <source>
        <strain>ATCC BAA-2496 / DSM 23469 / PBi</strain>
    </source>
</reference>
<organism>
    <name type="scientific">Borrelia garinii subsp. bavariensis (strain ATCC BAA-2496 / DSM 23469 / PBi)</name>
    <name type="common">Borreliella bavariensis</name>
    <dbReference type="NCBI Taxonomy" id="290434"/>
    <lineage>
        <taxon>Bacteria</taxon>
        <taxon>Pseudomonadati</taxon>
        <taxon>Spirochaetota</taxon>
        <taxon>Spirochaetia</taxon>
        <taxon>Spirochaetales</taxon>
        <taxon>Borreliaceae</taxon>
        <taxon>Borreliella</taxon>
    </lineage>
</organism>
<feature type="chain" id="PRO_0000174498" description="S-adenosylmethionine synthase">
    <location>
        <begin position="1"/>
        <end position="392"/>
    </location>
</feature>
<feature type="region of interest" description="Flexible loop" evidence="1">
    <location>
        <begin position="106"/>
        <end position="116"/>
    </location>
</feature>
<feature type="binding site" description="in other chain" evidence="1">
    <location>
        <position position="20"/>
    </location>
    <ligand>
        <name>ATP</name>
        <dbReference type="ChEBI" id="CHEBI:30616"/>
        <note>ligand shared between two neighboring subunits</note>
    </ligand>
</feature>
<feature type="binding site" evidence="1">
    <location>
        <position position="22"/>
    </location>
    <ligand>
        <name>Mg(2+)</name>
        <dbReference type="ChEBI" id="CHEBI:18420"/>
    </ligand>
</feature>
<feature type="binding site" evidence="1">
    <location>
        <position position="48"/>
    </location>
    <ligand>
        <name>K(+)</name>
        <dbReference type="ChEBI" id="CHEBI:29103"/>
    </ligand>
</feature>
<feature type="binding site" description="in other chain" evidence="1">
    <location>
        <position position="61"/>
    </location>
    <ligand>
        <name>L-methionine</name>
        <dbReference type="ChEBI" id="CHEBI:57844"/>
        <note>ligand shared between two neighboring subunits</note>
    </ligand>
</feature>
<feature type="binding site" description="in other chain" evidence="1">
    <location>
        <position position="106"/>
    </location>
    <ligand>
        <name>L-methionine</name>
        <dbReference type="ChEBI" id="CHEBI:57844"/>
        <note>ligand shared between two neighboring subunits</note>
    </ligand>
</feature>
<feature type="binding site" description="in other chain" evidence="1">
    <location>
        <begin position="171"/>
        <end position="173"/>
    </location>
    <ligand>
        <name>ATP</name>
        <dbReference type="ChEBI" id="CHEBI:30616"/>
        <note>ligand shared between two neighboring subunits</note>
    </ligand>
</feature>
<feature type="binding site" evidence="1">
    <location>
        <position position="248"/>
    </location>
    <ligand>
        <name>ATP</name>
        <dbReference type="ChEBI" id="CHEBI:30616"/>
        <note>ligand shared between two neighboring subunits</note>
    </ligand>
</feature>
<feature type="binding site" evidence="1">
    <location>
        <position position="248"/>
    </location>
    <ligand>
        <name>L-methionine</name>
        <dbReference type="ChEBI" id="CHEBI:57844"/>
        <note>ligand shared between two neighboring subunits</note>
    </ligand>
</feature>
<feature type="binding site" description="in other chain" evidence="1">
    <location>
        <begin position="254"/>
        <end position="255"/>
    </location>
    <ligand>
        <name>ATP</name>
        <dbReference type="ChEBI" id="CHEBI:30616"/>
        <note>ligand shared between two neighboring subunits</note>
    </ligand>
</feature>
<feature type="binding site" evidence="1">
    <location>
        <position position="271"/>
    </location>
    <ligand>
        <name>ATP</name>
        <dbReference type="ChEBI" id="CHEBI:30616"/>
        <note>ligand shared between two neighboring subunits</note>
    </ligand>
</feature>
<feature type="binding site" evidence="1">
    <location>
        <position position="275"/>
    </location>
    <ligand>
        <name>ATP</name>
        <dbReference type="ChEBI" id="CHEBI:30616"/>
        <note>ligand shared between two neighboring subunits</note>
    </ligand>
</feature>
<feature type="binding site" description="in other chain" evidence="1">
    <location>
        <position position="279"/>
    </location>
    <ligand>
        <name>L-methionine</name>
        <dbReference type="ChEBI" id="CHEBI:57844"/>
        <note>ligand shared between two neighboring subunits</note>
    </ligand>
</feature>
<comment type="function">
    <text evidence="1">Catalyzes the formation of S-adenosylmethionine (AdoMet) from methionine and ATP. The overall synthetic reaction is composed of two sequential steps, AdoMet formation and the subsequent tripolyphosphate hydrolysis which occurs prior to release of AdoMet from the enzyme.</text>
</comment>
<comment type="catalytic activity">
    <reaction evidence="1">
        <text>L-methionine + ATP + H2O = S-adenosyl-L-methionine + phosphate + diphosphate</text>
        <dbReference type="Rhea" id="RHEA:21080"/>
        <dbReference type="ChEBI" id="CHEBI:15377"/>
        <dbReference type="ChEBI" id="CHEBI:30616"/>
        <dbReference type="ChEBI" id="CHEBI:33019"/>
        <dbReference type="ChEBI" id="CHEBI:43474"/>
        <dbReference type="ChEBI" id="CHEBI:57844"/>
        <dbReference type="ChEBI" id="CHEBI:59789"/>
        <dbReference type="EC" id="2.5.1.6"/>
    </reaction>
</comment>
<comment type="cofactor">
    <cofactor evidence="1">
        <name>Mg(2+)</name>
        <dbReference type="ChEBI" id="CHEBI:18420"/>
    </cofactor>
    <text evidence="1">Binds 2 divalent ions per subunit.</text>
</comment>
<comment type="cofactor">
    <cofactor evidence="1">
        <name>K(+)</name>
        <dbReference type="ChEBI" id="CHEBI:29103"/>
    </cofactor>
    <text evidence="1">Binds 1 potassium ion per subunit.</text>
</comment>
<comment type="pathway">
    <text evidence="1">Amino-acid biosynthesis; S-adenosyl-L-methionine biosynthesis; S-adenosyl-L-methionine from L-methionine: step 1/1.</text>
</comment>
<comment type="subunit">
    <text evidence="1">Homotetramer; dimer of dimers.</text>
</comment>
<comment type="subcellular location">
    <subcellularLocation>
        <location evidence="1">Cytoplasm</location>
    </subcellularLocation>
</comment>
<comment type="similarity">
    <text evidence="1">Belongs to the AdoMet synthase family.</text>
</comment>
<name>METK_BORGP</name>
<protein>
    <recommendedName>
        <fullName evidence="1">S-adenosylmethionine synthase</fullName>
        <shortName evidence="1">AdoMet synthase</shortName>
        <ecNumber evidence="1">2.5.1.6</ecNumber>
    </recommendedName>
    <alternativeName>
        <fullName evidence="1">MAT</fullName>
    </alternativeName>
    <alternativeName>
        <fullName evidence="1">Methionine adenosyltransferase</fullName>
    </alternativeName>
</protein>
<sequence>MNKILAANQTLTSEAVSEGHPDKIADQISDAILDEILKVDKNAKVACEVIITQNLVVIAGEINSPVKKTLDIKEIAKKIIKDIGYTNIDYGLDYKTITVIDAIGNQSQDIINAIKKKGSNALGAGDQGIIFGYACDETKNFLPAPYELANSILKKASNLRKSGAIEWLRPDSKSQVTIEYDKNRRPVKIKNIIVSHQHHPNISQKLIREPIIEEIIKPTIQDKSIIDENTTYCINPSGNFVIGGPTGDTGLTGRKIIADSYGGFARHGGGAYSGKDATKVDRSAAYMARYIAKNMVAAGISKEFELQLAYAIGIENPISIQITSGINDPKYANKILNFIVNNFDLTPNGIIEKLKLKQPIYLKTCTYGQLGKNEFEWEKLDFVKKIQTVLKK</sequence>
<gene>
    <name evidence="1" type="primary">metK</name>
    <name type="ordered locus">BG0375</name>
</gene>
<proteinExistence type="inferred from homology"/>
<evidence type="ECO:0000255" key="1">
    <source>
        <dbReference type="HAMAP-Rule" id="MF_00086"/>
    </source>
</evidence>
<accession>Q661P3</accession>